<feature type="chain" id="PRO_0000140124" description="GMP synthase [glutamine-hydrolyzing]">
    <location>
        <begin position="1"/>
        <end position="525"/>
    </location>
</feature>
<feature type="domain" description="Glutamine amidotransferase type-1" evidence="1">
    <location>
        <begin position="9"/>
        <end position="207"/>
    </location>
</feature>
<feature type="domain" description="GMPS ATP-PPase" evidence="1">
    <location>
        <begin position="208"/>
        <end position="400"/>
    </location>
</feature>
<feature type="active site" description="Nucleophile" evidence="1">
    <location>
        <position position="86"/>
    </location>
</feature>
<feature type="active site" evidence="1">
    <location>
        <position position="181"/>
    </location>
</feature>
<feature type="active site" evidence="1">
    <location>
        <position position="183"/>
    </location>
</feature>
<feature type="binding site" evidence="1">
    <location>
        <begin position="235"/>
        <end position="241"/>
    </location>
    <ligand>
        <name>ATP</name>
        <dbReference type="ChEBI" id="CHEBI:30616"/>
    </ligand>
</feature>
<dbReference type="EC" id="6.3.5.2" evidence="1"/>
<dbReference type="EMBL" id="AE014075">
    <property type="protein sequence ID" value="AAN81476.1"/>
    <property type="molecule type" value="Genomic_DNA"/>
</dbReference>
<dbReference type="RefSeq" id="WP_000138282.1">
    <property type="nucleotide sequence ID" value="NZ_CP051263.1"/>
</dbReference>
<dbReference type="SMR" id="P64294"/>
<dbReference type="STRING" id="199310.c3026"/>
<dbReference type="GeneID" id="75172615"/>
<dbReference type="KEGG" id="ecc:c3026"/>
<dbReference type="eggNOG" id="COG0518">
    <property type="taxonomic scope" value="Bacteria"/>
</dbReference>
<dbReference type="eggNOG" id="COG0519">
    <property type="taxonomic scope" value="Bacteria"/>
</dbReference>
<dbReference type="HOGENOM" id="CLU_014340_0_5_6"/>
<dbReference type="BioCyc" id="ECOL199310:C3026-MONOMER"/>
<dbReference type="UniPathway" id="UPA00189">
    <property type="reaction ID" value="UER00296"/>
</dbReference>
<dbReference type="Proteomes" id="UP000001410">
    <property type="component" value="Chromosome"/>
</dbReference>
<dbReference type="GO" id="GO:0005829">
    <property type="term" value="C:cytosol"/>
    <property type="evidence" value="ECO:0007669"/>
    <property type="project" value="TreeGrafter"/>
</dbReference>
<dbReference type="GO" id="GO:0005524">
    <property type="term" value="F:ATP binding"/>
    <property type="evidence" value="ECO:0007669"/>
    <property type="project" value="UniProtKB-UniRule"/>
</dbReference>
<dbReference type="GO" id="GO:0003921">
    <property type="term" value="F:GMP synthase activity"/>
    <property type="evidence" value="ECO:0007669"/>
    <property type="project" value="InterPro"/>
</dbReference>
<dbReference type="CDD" id="cd01742">
    <property type="entry name" value="GATase1_GMP_Synthase"/>
    <property type="match status" value="1"/>
</dbReference>
<dbReference type="CDD" id="cd01997">
    <property type="entry name" value="GMP_synthase_C"/>
    <property type="match status" value="1"/>
</dbReference>
<dbReference type="FunFam" id="3.30.300.10:FF:000002">
    <property type="entry name" value="GMP synthase [glutamine-hydrolyzing]"/>
    <property type="match status" value="1"/>
</dbReference>
<dbReference type="FunFam" id="3.40.50.620:FF:000001">
    <property type="entry name" value="GMP synthase [glutamine-hydrolyzing]"/>
    <property type="match status" value="1"/>
</dbReference>
<dbReference type="FunFam" id="3.40.50.880:FF:000001">
    <property type="entry name" value="GMP synthase [glutamine-hydrolyzing]"/>
    <property type="match status" value="1"/>
</dbReference>
<dbReference type="Gene3D" id="3.30.300.10">
    <property type="match status" value="1"/>
</dbReference>
<dbReference type="Gene3D" id="3.40.50.880">
    <property type="match status" value="1"/>
</dbReference>
<dbReference type="Gene3D" id="3.40.50.620">
    <property type="entry name" value="HUPs"/>
    <property type="match status" value="1"/>
</dbReference>
<dbReference type="HAMAP" id="MF_00344">
    <property type="entry name" value="GMP_synthase"/>
    <property type="match status" value="1"/>
</dbReference>
<dbReference type="InterPro" id="IPR029062">
    <property type="entry name" value="Class_I_gatase-like"/>
</dbReference>
<dbReference type="InterPro" id="IPR017926">
    <property type="entry name" value="GATASE"/>
</dbReference>
<dbReference type="InterPro" id="IPR001674">
    <property type="entry name" value="GMP_synth_C"/>
</dbReference>
<dbReference type="InterPro" id="IPR004739">
    <property type="entry name" value="GMP_synth_GATase"/>
</dbReference>
<dbReference type="InterPro" id="IPR022955">
    <property type="entry name" value="GMP_synthase"/>
</dbReference>
<dbReference type="InterPro" id="IPR025777">
    <property type="entry name" value="GMPS_ATP_PPase_dom"/>
</dbReference>
<dbReference type="InterPro" id="IPR022310">
    <property type="entry name" value="NAD/GMP_synthase"/>
</dbReference>
<dbReference type="InterPro" id="IPR014729">
    <property type="entry name" value="Rossmann-like_a/b/a_fold"/>
</dbReference>
<dbReference type="NCBIfam" id="TIGR00884">
    <property type="entry name" value="guaA_Cterm"/>
    <property type="match status" value="1"/>
</dbReference>
<dbReference type="NCBIfam" id="TIGR00888">
    <property type="entry name" value="guaA_Nterm"/>
    <property type="match status" value="1"/>
</dbReference>
<dbReference type="NCBIfam" id="NF000848">
    <property type="entry name" value="PRK00074.1"/>
    <property type="match status" value="1"/>
</dbReference>
<dbReference type="PANTHER" id="PTHR11922:SF2">
    <property type="entry name" value="GMP SYNTHASE [GLUTAMINE-HYDROLYZING]"/>
    <property type="match status" value="1"/>
</dbReference>
<dbReference type="PANTHER" id="PTHR11922">
    <property type="entry name" value="GMP SYNTHASE-RELATED"/>
    <property type="match status" value="1"/>
</dbReference>
<dbReference type="Pfam" id="PF00117">
    <property type="entry name" value="GATase"/>
    <property type="match status" value="1"/>
</dbReference>
<dbReference type="Pfam" id="PF00958">
    <property type="entry name" value="GMP_synt_C"/>
    <property type="match status" value="1"/>
</dbReference>
<dbReference type="Pfam" id="PF02540">
    <property type="entry name" value="NAD_synthase"/>
    <property type="match status" value="1"/>
</dbReference>
<dbReference type="PRINTS" id="PR00097">
    <property type="entry name" value="ANTSNTHASEII"/>
</dbReference>
<dbReference type="PRINTS" id="PR00099">
    <property type="entry name" value="CPSGATASE"/>
</dbReference>
<dbReference type="PRINTS" id="PR00096">
    <property type="entry name" value="GATASE"/>
</dbReference>
<dbReference type="SUPFAM" id="SSF52402">
    <property type="entry name" value="Adenine nucleotide alpha hydrolases-like"/>
    <property type="match status" value="1"/>
</dbReference>
<dbReference type="SUPFAM" id="SSF52317">
    <property type="entry name" value="Class I glutamine amidotransferase-like"/>
    <property type="match status" value="1"/>
</dbReference>
<dbReference type="SUPFAM" id="SSF54810">
    <property type="entry name" value="GMP synthetase C-terminal dimerisation domain"/>
    <property type="match status" value="1"/>
</dbReference>
<dbReference type="PROSITE" id="PS51273">
    <property type="entry name" value="GATASE_TYPE_1"/>
    <property type="match status" value="1"/>
</dbReference>
<dbReference type="PROSITE" id="PS51553">
    <property type="entry name" value="GMPS_ATP_PPASE"/>
    <property type="match status" value="1"/>
</dbReference>
<reference key="1">
    <citation type="journal article" date="2002" name="Proc. Natl. Acad. Sci. U.S.A.">
        <title>Extensive mosaic structure revealed by the complete genome sequence of uropathogenic Escherichia coli.</title>
        <authorList>
            <person name="Welch R.A."/>
            <person name="Burland V."/>
            <person name="Plunkett G. III"/>
            <person name="Redford P."/>
            <person name="Roesch P."/>
            <person name="Rasko D."/>
            <person name="Buckles E.L."/>
            <person name="Liou S.-R."/>
            <person name="Boutin A."/>
            <person name="Hackett J."/>
            <person name="Stroud D."/>
            <person name="Mayhew G.F."/>
            <person name="Rose D.J."/>
            <person name="Zhou S."/>
            <person name="Schwartz D.C."/>
            <person name="Perna N.T."/>
            <person name="Mobley H.L.T."/>
            <person name="Donnenberg M.S."/>
            <person name="Blattner F.R."/>
        </authorList>
    </citation>
    <scope>NUCLEOTIDE SEQUENCE [LARGE SCALE GENOMIC DNA]</scope>
    <source>
        <strain>CFT073 / ATCC 700928 / UPEC</strain>
    </source>
</reference>
<comment type="function">
    <text evidence="1">Catalyzes the synthesis of GMP from XMP.</text>
</comment>
<comment type="catalytic activity">
    <reaction evidence="1">
        <text>XMP + L-glutamine + ATP + H2O = GMP + L-glutamate + AMP + diphosphate + 2 H(+)</text>
        <dbReference type="Rhea" id="RHEA:11680"/>
        <dbReference type="ChEBI" id="CHEBI:15377"/>
        <dbReference type="ChEBI" id="CHEBI:15378"/>
        <dbReference type="ChEBI" id="CHEBI:29985"/>
        <dbReference type="ChEBI" id="CHEBI:30616"/>
        <dbReference type="ChEBI" id="CHEBI:33019"/>
        <dbReference type="ChEBI" id="CHEBI:57464"/>
        <dbReference type="ChEBI" id="CHEBI:58115"/>
        <dbReference type="ChEBI" id="CHEBI:58359"/>
        <dbReference type="ChEBI" id="CHEBI:456215"/>
        <dbReference type="EC" id="6.3.5.2"/>
    </reaction>
</comment>
<comment type="pathway">
    <text evidence="1">Purine metabolism; GMP biosynthesis; GMP from XMP (L-Gln route): step 1/1.</text>
</comment>
<comment type="subunit">
    <text evidence="1">Homodimer.</text>
</comment>
<accession>P64294</accession>
<accession>Q8XAB5</accession>
<sequence length="525" mass="58665">MTENIHKHRILILDFGSQYTQLVARRVRELGVYCELWAWDVTEAQIRDFNPSGIILSGGPESTTEENSPRAPQYVFEAGVPVFGVCYGMQTMAMQLGGHVEASNEREFGYAQVEVVNDSALVRGIEDALTADGKPLLDVWMSHGDKVTAIPSDFVTVASTESCPFAIMANEEKRFYGVQFHPEVTHTRQGMRMLERFVRDICQCEALWTPAKIIDDAVARIREQVGDDKVILGLSGGVDSSVTAMLLHRAIGKNLTCVFVDNGLLRLNEAEQVLDMFGDHFGLNIVHVPAEDRFLSALAGENDPEAKRKIIGRVFVEVFDEEALKLEDVKWLAQGTIYPDVIESAASATGKAHVIKSHHNVGGLPKEMKMGLVEPLKELFKDEVRKIGLELGLPYDMLYRHPFPGPGLGVRVLGEVKKEYCDLLRRADAIFIEELRKADLYDKVSQAFTVFLPVRSVGVMGDGRKYDWVVSLRAVETIDFMTAHWAHLPYDFLGRVSNRIINEVNGISRVVYDISGKPPATIEWE</sequence>
<organism>
    <name type="scientific">Escherichia coli O6:H1 (strain CFT073 / ATCC 700928 / UPEC)</name>
    <dbReference type="NCBI Taxonomy" id="199310"/>
    <lineage>
        <taxon>Bacteria</taxon>
        <taxon>Pseudomonadati</taxon>
        <taxon>Pseudomonadota</taxon>
        <taxon>Gammaproteobacteria</taxon>
        <taxon>Enterobacterales</taxon>
        <taxon>Enterobacteriaceae</taxon>
        <taxon>Escherichia</taxon>
    </lineage>
</organism>
<keyword id="KW-0067">ATP-binding</keyword>
<keyword id="KW-0315">Glutamine amidotransferase</keyword>
<keyword id="KW-0332">GMP biosynthesis</keyword>
<keyword id="KW-0436">Ligase</keyword>
<keyword id="KW-0547">Nucleotide-binding</keyword>
<keyword id="KW-0658">Purine biosynthesis</keyword>
<keyword id="KW-1185">Reference proteome</keyword>
<proteinExistence type="inferred from homology"/>
<name>GUAA_ECOL6</name>
<gene>
    <name evidence="1" type="primary">guaA</name>
    <name type="ordered locus">c3026</name>
</gene>
<protein>
    <recommendedName>
        <fullName evidence="1">GMP synthase [glutamine-hydrolyzing]</fullName>
        <ecNumber evidence="1">6.3.5.2</ecNumber>
    </recommendedName>
    <alternativeName>
        <fullName evidence="1">GMP synthetase</fullName>
    </alternativeName>
    <alternativeName>
        <fullName evidence="1">Glutamine amidotransferase</fullName>
    </alternativeName>
</protein>
<evidence type="ECO:0000255" key="1">
    <source>
        <dbReference type="HAMAP-Rule" id="MF_00344"/>
    </source>
</evidence>